<comment type="function">
    <text evidence="1">Endonuclease that specifically degrades the RNA of RNA-DNA hybrids.</text>
</comment>
<comment type="catalytic activity">
    <reaction evidence="1">
        <text>Endonucleolytic cleavage to 5'-phosphomonoester.</text>
        <dbReference type="EC" id="3.1.26.4"/>
    </reaction>
</comment>
<comment type="cofactor">
    <cofactor evidence="1">
        <name>Mn(2+)</name>
        <dbReference type="ChEBI" id="CHEBI:29035"/>
    </cofactor>
    <cofactor evidence="1">
        <name>Mg(2+)</name>
        <dbReference type="ChEBI" id="CHEBI:18420"/>
    </cofactor>
    <text evidence="1">Manganese or magnesium. Binds 1 divalent metal ion per monomer in the absence of substrate. May bind a second metal ion after substrate binding.</text>
</comment>
<comment type="subcellular location">
    <subcellularLocation>
        <location evidence="1">Cytoplasm</location>
    </subcellularLocation>
</comment>
<comment type="similarity">
    <text evidence="1">Belongs to the RNase HII family.</text>
</comment>
<keyword id="KW-0963">Cytoplasm</keyword>
<keyword id="KW-0255">Endonuclease</keyword>
<keyword id="KW-0378">Hydrolase</keyword>
<keyword id="KW-0464">Manganese</keyword>
<keyword id="KW-0479">Metal-binding</keyword>
<keyword id="KW-0540">Nuclease</keyword>
<name>RNH2_VIBCM</name>
<protein>
    <recommendedName>
        <fullName evidence="1">Ribonuclease HII</fullName>
        <shortName evidence="1">RNase HII</shortName>
        <ecNumber evidence="1">3.1.26.4</ecNumber>
    </recommendedName>
</protein>
<dbReference type="EC" id="3.1.26.4" evidence="1"/>
<dbReference type="EMBL" id="CP001233">
    <property type="protein sequence ID" value="ACP06470.1"/>
    <property type="molecule type" value="Genomic_DNA"/>
</dbReference>
<dbReference type="RefSeq" id="WP_001085485.1">
    <property type="nucleotide sequence ID" value="NC_012578.1"/>
</dbReference>
<dbReference type="SMR" id="C3LQ18"/>
<dbReference type="KEGG" id="vcm:VCM66_2169"/>
<dbReference type="HOGENOM" id="CLU_036532_3_2_6"/>
<dbReference type="Proteomes" id="UP000001217">
    <property type="component" value="Chromosome I"/>
</dbReference>
<dbReference type="GO" id="GO:0005737">
    <property type="term" value="C:cytoplasm"/>
    <property type="evidence" value="ECO:0007669"/>
    <property type="project" value="UniProtKB-SubCell"/>
</dbReference>
<dbReference type="GO" id="GO:0032299">
    <property type="term" value="C:ribonuclease H2 complex"/>
    <property type="evidence" value="ECO:0007669"/>
    <property type="project" value="TreeGrafter"/>
</dbReference>
<dbReference type="GO" id="GO:0030145">
    <property type="term" value="F:manganese ion binding"/>
    <property type="evidence" value="ECO:0007669"/>
    <property type="project" value="UniProtKB-UniRule"/>
</dbReference>
<dbReference type="GO" id="GO:0003723">
    <property type="term" value="F:RNA binding"/>
    <property type="evidence" value="ECO:0007669"/>
    <property type="project" value="InterPro"/>
</dbReference>
<dbReference type="GO" id="GO:0004523">
    <property type="term" value="F:RNA-DNA hybrid ribonuclease activity"/>
    <property type="evidence" value="ECO:0007669"/>
    <property type="project" value="UniProtKB-UniRule"/>
</dbReference>
<dbReference type="GO" id="GO:0043137">
    <property type="term" value="P:DNA replication, removal of RNA primer"/>
    <property type="evidence" value="ECO:0007669"/>
    <property type="project" value="TreeGrafter"/>
</dbReference>
<dbReference type="GO" id="GO:0006298">
    <property type="term" value="P:mismatch repair"/>
    <property type="evidence" value="ECO:0007669"/>
    <property type="project" value="TreeGrafter"/>
</dbReference>
<dbReference type="CDD" id="cd07182">
    <property type="entry name" value="RNase_HII_bacteria_HII_like"/>
    <property type="match status" value="1"/>
</dbReference>
<dbReference type="FunFam" id="3.30.420.10:FF:000006">
    <property type="entry name" value="Ribonuclease HII"/>
    <property type="match status" value="1"/>
</dbReference>
<dbReference type="Gene3D" id="3.30.420.10">
    <property type="entry name" value="Ribonuclease H-like superfamily/Ribonuclease H"/>
    <property type="match status" value="1"/>
</dbReference>
<dbReference type="HAMAP" id="MF_00052_B">
    <property type="entry name" value="RNase_HII_B"/>
    <property type="match status" value="1"/>
</dbReference>
<dbReference type="InterPro" id="IPR022898">
    <property type="entry name" value="RNase_HII"/>
</dbReference>
<dbReference type="InterPro" id="IPR001352">
    <property type="entry name" value="RNase_HII/HIII"/>
</dbReference>
<dbReference type="InterPro" id="IPR024567">
    <property type="entry name" value="RNase_HII/HIII_dom"/>
</dbReference>
<dbReference type="InterPro" id="IPR012337">
    <property type="entry name" value="RNaseH-like_sf"/>
</dbReference>
<dbReference type="InterPro" id="IPR036397">
    <property type="entry name" value="RNaseH_sf"/>
</dbReference>
<dbReference type="NCBIfam" id="NF000594">
    <property type="entry name" value="PRK00015.1-1"/>
    <property type="match status" value="1"/>
</dbReference>
<dbReference type="NCBIfam" id="NF000595">
    <property type="entry name" value="PRK00015.1-3"/>
    <property type="match status" value="1"/>
</dbReference>
<dbReference type="NCBIfam" id="NF000596">
    <property type="entry name" value="PRK00015.1-4"/>
    <property type="match status" value="1"/>
</dbReference>
<dbReference type="PANTHER" id="PTHR10954">
    <property type="entry name" value="RIBONUCLEASE H2 SUBUNIT A"/>
    <property type="match status" value="1"/>
</dbReference>
<dbReference type="PANTHER" id="PTHR10954:SF18">
    <property type="entry name" value="RIBONUCLEASE HII"/>
    <property type="match status" value="1"/>
</dbReference>
<dbReference type="Pfam" id="PF01351">
    <property type="entry name" value="RNase_HII"/>
    <property type="match status" value="1"/>
</dbReference>
<dbReference type="SUPFAM" id="SSF53098">
    <property type="entry name" value="Ribonuclease H-like"/>
    <property type="match status" value="1"/>
</dbReference>
<dbReference type="PROSITE" id="PS51975">
    <property type="entry name" value="RNASE_H_2"/>
    <property type="match status" value="1"/>
</dbReference>
<reference key="1">
    <citation type="journal article" date="2008" name="PLoS ONE">
        <title>A recalibrated molecular clock and independent origins for the cholera pandemic clones.</title>
        <authorList>
            <person name="Feng L."/>
            <person name="Reeves P.R."/>
            <person name="Lan R."/>
            <person name="Ren Y."/>
            <person name="Gao C."/>
            <person name="Zhou Z."/>
            <person name="Ren Y."/>
            <person name="Cheng J."/>
            <person name="Wang W."/>
            <person name="Wang J."/>
            <person name="Qian W."/>
            <person name="Li D."/>
            <person name="Wang L."/>
        </authorList>
    </citation>
    <scope>NUCLEOTIDE SEQUENCE [LARGE SCALE GENOMIC DNA]</scope>
    <source>
        <strain>M66-2</strain>
    </source>
</reference>
<evidence type="ECO:0000255" key="1">
    <source>
        <dbReference type="HAMAP-Rule" id="MF_00052"/>
    </source>
</evidence>
<evidence type="ECO:0000255" key="2">
    <source>
        <dbReference type="PROSITE-ProRule" id="PRU01319"/>
    </source>
</evidence>
<gene>
    <name evidence="1" type="primary">rnhB</name>
    <name type="ordered locus">VCM66_2169</name>
</gene>
<sequence length="206" mass="22389">MAKKPSIELPPFEIPAGYALIAGVDEVGRGPLVGDVVTAAVILDPNRPIMGLNDSKKLSEKKRLALFPEIQVKALAWAVGRCSPQEIDELNIFQATMVAMQRAVAGLRIQPDLVLIDGNKIPKLPMEAQAVVKGDLRVAQISAASIIAKVIRDQEMEALDKQYPQFGFAKHKGYPTAAHFAAIEQHGVIEQHRKSFGPVKRALGIE</sequence>
<feature type="chain" id="PRO_1000117695" description="Ribonuclease HII">
    <location>
        <begin position="1"/>
        <end position="206"/>
    </location>
</feature>
<feature type="domain" description="RNase H type-2" evidence="2">
    <location>
        <begin position="19"/>
        <end position="206"/>
    </location>
</feature>
<feature type="binding site" evidence="1">
    <location>
        <position position="25"/>
    </location>
    <ligand>
        <name>a divalent metal cation</name>
        <dbReference type="ChEBI" id="CHEBI:60240"/>
    </ligand>
</feature>
<feature type="binding site" evidence="1">
    <location>
        <position position="26"/>
    </location>
    <ligand>
        <name>a divalent metal cation</name>
        <dbReference type="ChEBI" id="CHEBI:60240"/>
    </ligand>
</feature>
<feature type="binding site" evidence="1">
    <location>
        <position position="117"/>
    </location>
    <ligand>
        <name>a divalent metal cation</name>
        <dbReference type="ChEBI" id="CHEBI:60240"/>
    </ligand>
</feature>
<proteinExistence type="inferred from homology"/>
<accession>C3LQ18</accession>
<organism>
    <name type="scientific">Vibrio cholerae serotype O1 (strain M66-2)</name>
    <dbReference type="NCBI Taxonomy" id="579112"/>
    <lineage>
        <taxon>Bacteria</taxon>
        <taxon>Pseudomonadati</taxon>
        <taxon>Pseudomonadota</taxon>
        <taxon>Gammaproteobacteria</taxon>
        <taxon>Vibrionales</taxon>
        <taxon>Vibrionaceae</taxon>
        <taxon>Vibrio</taxon>
    </lineage>
</organism>